<organism>
    <name type="scientific">Salinispora arenicola (strain CNS-205)</name>
    <dbReference type="NCBI Taxonomy" id="391037"/>
    <lineage>
        <taxon>Bacteria</taxon>
        <taxon>Bacillati</taxon>
        <taxon>Actinomycetota</taxon>
        <taxon>Actinomycetes</taxon>
        <taxon>Micromonosporales</taxon>
        <taxon>Micromonosporaceae</taxon>
        <taxon>Salinispora</taxon>
    </lineage>
</organism>
<feature type="chain" id="PRO_1000088409" description="Pyridoxal 5'-phosphate synthase subunit PdxS">
    <location>
        <begin position="1"/>
        <end position="306"/>
    </location>
</feature>
<feature type="active site" description="Schiff-base intermediate with D-ribose 5-phosphate" evidence="1">
    <location>
        <position position="93"/>
    </location>
</feature>
<feature type="binding site" evidence="1">
    <location>
        <position position="36"/>
    </location>
    <ligand>
        <name>D-ribose 5-phosphate</name>
        <dbReference type="ChEBI" id="CHEBI:78346"/>
    </ligand>
</feature>
<feature type="binding site" evidence="1">
    <location>
        <position position="165"/>
    </location>
    <ligand>
        <name>D-ribose 5-phosphate</name>
        <dbReference type="ChEBI" id="CHEBI:78346"/>
    </ligand>
</feature>
<feature type="binding site" evidence="1">
    <location>
        <position position="177"/>
    </location>
    <ligand>
        <name>D-glyceraldehyde 3-phosphate</name>
        <dbReference type="ChEBI" id="CHEBI:59776"/>
    </ligand>
</feature>
<feature type="binding site" evidence="1">
    <location>
        <position position="226"/>
    </location>
    <ligand>
        <name>D-ribose 5-phosphate</name>
        <dbReference type="ChEBI" id="CHEBI:78346"/>
    </ligand>
</feature>
<feature type="binding site" evidence="1">
    <location>
        <begin position="247"/>
        <end position="248"/>
    </location>
    <ligand>
        <name>D-ribose 5-phosphate</name>
        <dbReference type="ChEBI" id="CHEBI:78346"/>
    </ligand>
</feature>
<keyword id="KW-0456">Lyase</keyword>
<keyword id="KW-0663">Pyridoxal phosphate</keyword>
<keyword id="KW-0704">Schiff base</keyword>
<comment type="function">
    <text evidence="1">Catalyzes the formation of pyridoxal 5'-phosphate from ribose 5-phosphate (RBP), glyceraldehyde 3-phosphate (G3P) and ammonia. The ammonia is provided by the PdxT subunit. Can also use ribulose 5-phosphate and dihydroxyacetone phosphate as substrates, resulting from enzyme-catalyzed isomerization of RBP and G3P, respectively.</text>
</comment>
<comment type="catalytic activity">
    <reaction evidence="1">
        <text>aldehydo-D-ribose 5-phosphate + D-glyceraldehyde 3-phosphate + L-glutamine = pyridoxal 5'-phosphate + L-glutamate + phosphate + 3 H2O + H(+)</text>
        <dbReference type="Rhea" id="RHEA:31507"/>
        <dbReference type="ChEBI" id="CHEBI:15377"/>
        <dbReference type="ChEBI" id="CHEBI:15378"/>
        <dbReference type="ChEBI" id="CHEBI:29985"/>
        <dbReference type="ChEBI" id="CHEBI:43474"/>
        <dbReference type="ChEBI" id="CHEBI:58273"/>
        <dbReference type="ChEBI" id="CHEBI:58359"/>
        <dbReference type="ChEBI" id="CHEBI:59776"/>
        <dbReference type="ChEBI" id="CHEBI:597326"/>
        <dbReference type="EC" id="4.3.3.6"/>
    </reaction>
</comment>
<comment type="pathway">
    <text evidence="1">Cofactor biosynthesis; pyridoxal 5'-phosphate biosynthesis.</text>
</comment>
<comment type="subunit">
    <text evidence="1">In the presence of PdxT, forms a dodecamer of heterodimers.</text>
</comment>
<comment type="similarity">
    <text evidence="1">Belongs to the PdxS/SNZ family.</text>
</comment>
<evidence type="ECO:0000255" key="1">
    <source>
        <dbReference type="HAMAP-Rule" id="MF_01824"/>
    </source>
</evidence>
<accession>A8LWZ4</accession>
<reference key="1">
    <citation type="submission" date="2007-10" db="EMBL/GenBank/DDBJ databases">
        <title>Complete sequence of Salinispora arenicola CNS-205.</title>
        <authorList>
            <consortium name="US DOE Joint Genome Institute"/>
            <person name="Copeland A."/>
            <person name="Lucas S."/>
            <person name="Lapidus A."/>
            <person name="Barry K."/>
            <person name="Glavina del Rio T."/>
            <person name="Dalin E."/>
            <person name="Tice H."/>
            <person name="Pitluck S."/>
            <person name="Foster B."/>
            <person name="Schmutz J."/>
            <person name="Larimer F."/>
            <person name="Land M."/>
            <person name="Hauser L."/>
            <person name="Kyrpides N."/>
            <person name="Ivanova N."/>
            <person name="Jensen P.R."/>
            <person name="Moore B.S."/>
            <person name="Penn K."/>
            <person name="Jenkins C."/>
            <person name="Udwary D."/>
            <person name="Xiang L."/>
            <person name="Gontang E."/>
            <person name="Richardson P."/>
        </authorList>
    </citation>
    <scope>NUCLEOTIDE SEQUENCE [LARGE SCALE GENOMIC DNA]</scope>
    <source>
        <strain>CNS-205</strain>
    </source>
</reference>
<dbReference type="EC" id="4.3.3.6" evidence="1"/>
<dbReference type="EMBL" id="CP000850">
    <property type="protein sequence ID" value="ABV97664.1"/>
    <property type="molecule type" value="Genomic_DNA"/>
</dbReference>
<dbReference type="SMR" id="A8LWZ4"/>
<dbReference type="STRING" id="391037.Sare_1777"/>
<dbReference type="KEGG" id="saq:Sare_1777"/>
<dbReference type="PATRIC" id="fig|391037.6.peg.1809"/>
<dbReference type="eggNOG" id="COG0214">
    <property type="taxonomic scope" value="Bacteria"/>
</dbReference>
<dbReference type="HOGENOM" id="CLU_055352_1_0_11"/>
<dbReference type="OrthoDB" id="9772545at2"/>
<dbReference type="UniPathway" id="UPA00245"/>
<dbReference type="GO" id="GO:0036381">
    <property type="term" value="F:pyridoxal 5'-phosphate synthase (glutamine hydrolysing) activity"/>
    <property type="evidence" value="ECO:0007669"/>
    <property type="project" value="UniProtKB-UniRule"/>
</dbReference>
<dbReference type="GO" id="GO:0006520">
    <property type="term" value="P:amino acid metabolic process"/>
    <property type="evidence" value="ECO:0007669"/>
    <property type="project" value="TreeGrafter"/>
</dbReference>
<dbReference type="GO" id="GO:0042823">
    <property type="term" value="P:pyridoxal phosphate biosynthetic process"/>
    <property type="evidence" value="ECO:0007669"/>
    <property type="project" value="UniProtKB-UniRule"/>
</dbReference>
<dbReference type="GO" id="GO:0008615">
    <property type="term" value="P:pyridoxine biosynthetic process"/>
    <property type="evidence" value="ECO:0007669"/>
    <property type="project" value="TreeGrafter"/>
</dbReference>
<dbReference type="CDD" id="cd04727">
    <property type="entry name" value="pdxS"/>
    <property type="match status" value="1"/>
</dbReference>
<dbReference type="FunFam" id="3.20.20.70:FF:000001">
    <property type="entry name" value="Pyridoxine biosynthesis protein PDX1"/>
    <property type="match status" value="1"/>
</dbReference>
<dbReference type="Gene3D" id="3.20.20.70">
    <property type="entry name" value="Aldolase class I"/>
    <property type="match status" value="1"/>
</dbReference>
<dbReference type="HAMAP" id="MF_01824">
    <property type="entry name" value="PdxS"/>
    <property type="match status" value="1"/>
</dbReference>
<dbReference type="InterPro" id="IPR013785">
    <property type="entry name" value="Aldolase_TIM"/>
</dbReference>
<dbReference type="InterPro" id="IPR001852">
    <property type="entry name" value="PdxS/SNZ"/>
</dbReference>
<dbReference type="InterPro" id="IPR033755">
    <property type="entry name" value="PdxS/SNZ_N"/>
</dbReference>
<dbReference type="InterPro" id="IPR011060">
    <property type="entry name" value="RibuloseP-bd_barrel"/>
</dbReference>
<dbReference type="NCBIfam" id="NF003215">
    <property type="entry name" value="PRK04180.1"/>
    <property type="match status" value="1"/>
</dbReference>
<dbReference type="NCBIfam" id="TIGR00343">
    <property type="entry name" value="pyridoxal 5'-phosphate synthase lyase subunit PdxS"/>
    <property type="match status" value="1"/>
</dbReference>
<dbReference type="PANTHER" id="PTHR31829">
    <property type="entry name" value="PYRIDOXAL 5'-PHOSPHATE SYNTHASE SUBUNIT SNZ1-RELATED"/>
    <property type="match status" value="1"/>
</dbReference>
<dbReference type="PANTHER" id="PTHR31829:SF0">
    <property type="entry name" value="PYRIDOXAL 5'-PHOSPHATE SYNTHASE SUBUNIT SNZ1-RELATED"/>
    <property type="match status" value="1"/>
</dbReference>
<dbReference type="Pfam" id="PF01680">
    <property type="entry name" value="SOR_SNZ"/>
    <property type="match status" value="1"/>
</dbReference>
<dbReference type="PIRSF" id="PIRSF029271">
    <property type="entry name" value="Pdx1"/>
    <property type="match status" value="1"/>
</dbReference>
<dbReference type="SUPFAM" id="SSF51366">
    <property type="entry name" value="Ribulose-phoshate binding barrel"/>
    <property type="match status" value="1"/>
</dbReference>
<dbReference type="PROSITE" id="PS01235">
    <property type="entry name" value="PDXS_SNZ_1"/>
    <property type="match status" value="1"/>
</dbReference>
<dbReference type="PROSITE" id="PS51129">
    <property type="entry name" value="PDXS_SNZ_2"/>
    <property type="match status" value="1"/>
</dbReference>
<proteinExistence type="inferred from homology"/>
<protein>
    <recommendedName>
        <fullName evidence="1">Pyridoxal 5'-phosphate synthase subunit PdxS</fullName>
        <shortName evidence="1">PLP synthase subunit PdxS</shortName>
        <ecNumber evidence="1">4.3.3.6</ecNumber>
    </recommendedName>
    <alternativeName>
        <fullName evidence="1">Pdx1</fullName>
    </alternativeName>
</protein>
<gene>
    <name evidence="1" type="primary">pdxS</name>
    <name type="ordered locus">Sare_1777</name>
</gene>
<sequence>MPESQSPNSSTNAPVTGTTHVKRGMAEMLKGGVIMDVVTPEQARIAEDAGAVAVMALERVPADIRAQGGVSRMSDPDMIDGIMQAVSIPVMAKARIGHFVEAQILQSLGVDYVDESEVLTPADYANHVDKWAFTVPFVCGATNLGEALRRITEGAAMIRSKGEAGTGDVSNATTHMRGIRTEIRRLQSLPADELYVAAKELQAPYELVREIAETGKLPVVLFTAGGIATPADAAMMMQLGAEGVFVGSGIFKSGNPAERAAAIVKATTFHDDPEVLAKVSRGLGEAMVGINVDQIPQSDRLAERGR</sequence>
<name>PDXS_SALAI</name>